<comment type="catalytic activity">
    <reaction>
        <text>Hydrolysis of terminal non-reducing beta-D-galactose residues in beta-D-galactosides.</text>
        <dbReference type="EC" id="3.2.1.23"/>
    </reaction>
</comment>
<comment type="similarity">
    <text evidence="2">Belongs to the glycosyl hydrolase 2 family.</text>
</comment>
<feature type="chain" id="PRO_0000057654" description="Beta-galactosidase">
    <location>
        <begin position="1"/>
        <end position="1005"/>
    </location>
</feature>
<feature type="active site" description="Proton donor" evidence="1">
    <location>
        <position position="455"/>
    </location>
</feature>
<feature type="active site" description="Nucleophile" evidence="1">
    <location>
        <position position="526"/>
    </location>
</feature>
<dbReference type="EC" id="3.2.1.23"/>
<dbReference type="EMBL" id="U62625">
    <property type="protein sequence ID" value="AAB17954.1"/>
    <property type="molecule type" value="Genomic_DNA"/>
</dbReference>
<dbReference type="PIR" id="T31333">
    <property type="entry name" value="T31333"/>
</dbReference>
<dbReference type="SMR" id="P70753"/>
<dbReference type="CAZy" id="GH2">
    <property type="family name" value="Glycoside Hydrolase Family 2"/>
</dbReference>
<dbReference type="GO" id="GO:0009341">
    <property type="term" value="C:beta-galactosidase complex"/>
    <property type="evidence" value="ECO:0007669"/>
    <property type="project" value="InterPro"/>
</dbReference>
<dbReference type="GO" id="GO:0004565">
    <property type="term" value="F:beta-galactosidase activity"/>
    <property type="evidence" value="ECO:0007669"/>
    <property type="project" value="UniProtKB-EC"/>
</dbReference>
<dbReference type="GO" id="GO:0030246">
    <property type="term" value="F:carbohydrate binding"/>
    <property type="evidence" value="ECO:0007669"/>
    <property type="project" value="InterPro"/>
</dbReference>
<dbReference type="GO" id="GO:0005990">
    <property type="term" value="P:lactose catabolic process"/>
    <property type="evidence" value="ECO:0007669"/>
    <property type="project" value="TreeGrafter"/>
</dbReference>
<dbReference type="Gene3D" id="2.70.98.10">
    <property type="match status" value="1"/>
</dbReference>
<dbReference type="Gene3D" id="2.60.120.260">
    <property type="entry name" value="Galactose-binding domain-like"/>
    <property type="match status" value="1"/>
</dbReference>
<dbReference type="Gene3D" id="3.20.20.80">
    <property type="entry name" value="Glycosidases"/>
    <property type="match status" value="1"/>
</dbReference>
<dbReference type="Gene3D" id="2.60.40.10">
    <property type="entry name" value="Immunoglobulins"/>
    <property type="match status" value="2"/>
</dbReference>
<dbReference type="InterPro" id="IPR004199">
    <property type="entry name" value="B-gal_small/dom_5"/>
</dbReference>
<dbReference type="InterPro" id="IPR050347">
    <property type="entry name" value="Bact_Beta-galactosidase"/>
</dbReference>
<dbReference type="InterPro" id="IPR036156">
    <property type="entry name" value="Beta-gal/glucu_dom_sf"/>
</dbReference>
<dbReference type="InterPro" id="IPR011013">
    <property type="entry name" value="Gal_mutarotase_sf_dom"/>
</dbReference>
<dbReference type="InterPro" id="IPR008979">
    <property type="entry name" value="Galactose-bd-like_sf"/>
</dbReference>
<dbReference type="InterPro" id="IPR014718">
    <property type="entry name" value="GH-type_carb-bd"/>
</dbReference>
<dbReference type="InterPro" id="IPR006101">
    <property type="entry name" value="Glyco_hydro_2"/>
</dbReference>
<dbReference type="InterPro" id="IPR023232">
    <property type="entry name" value="Glyco_hydro_2_AS"/>
</dbReference>
<dbReference type="InterPro" id="IPR006103">
    <property type="entry name" value="Glyco_hydro_2_cat"/>
</dbReference>
<dbReference type="InterPro" id="IPR023230">
    <property type="entry name" value="Glyco_hydro_2_CS"/>
</dbReference>
<dbReference type="InterPro" id="IPR006102">
    <property type="entry name" value="Glyco_hydro_2_Ig-like"/>
</dbReference>
<dbReference type="InterPro" id="IPR006104">
    <property type="entry name" value="Glyco_hydro_2_N"/>
</dbReference>
<dbReference type="InterPro" id="IPR017853">
    <property type="entry name" value="Glycoside_hydrolase_SF"/>
</dbReference>
<dbReference type="InterPro" id="IPR013783">
    <property type="entry name" value="Ig-like_fold"/>
</dbReference>
<dbReference type="InterPro" id="IPR032312">
    <property type="entry name" value="LacZ_4"/>
</dbReference>
<dbReference type="PANTHER" id="PTHR46323">
    <property type="entry name" value="BETA-GALACTOSIDASE"/>
    <property type="match status" value="1"/>
</dbReference>
<dbReference type="PANTHER" id="PTHR46323:SF2">
    <property type="entry name" value="BETA-GALACTOSIDASE"/>
    <property type="match status" value="1"/>
</dbReference>
<dbReference type="Pfam" id="PF02929">
    <property type="entry name" value="Bgal_small_N"/>
    <property type="match status" value="1"/>
</dbReference>
<dbReference type="Pfam" id="PF00703">
    <property type="entry name" value="Glyco_hydro_2"/>
    <property type="match status" value="1"/>
</dbReference>
<dbReference type="Pfam" id="PF02836">
    <property type="entry name" value="Glyco_hydro_2_C"/>
    <property type="match status" value="1"/>
</dbReference>
<dbReference type="Pfam" id="PF02837">
    <property type="entry name" value="Glyco_hydro_2_N"/>
    <property type="match status" value="1"/>
</dbReference>
<dbReference type="Pfam" id="PF16353">
    <property type="entry name" value="LacZ_4"/>
    <property type="match status" value="1"/>
</dbReference>
<dbReference type="PRINTS" id="PR00132">
    <property type="entry name" value="GLHYDRLASE2"/>
</dbReference>
<dbReference type="SMART" id="SM01038">
    <property type="entry name" value="Bgal_small_N"/>
    <property type="match status" value="1"/>
</dbReference>
<dbReference type="SUPFAM" id="SSF51445">
    <property type="entry name" value="(Trans)glycosidases"/>
    <property type="match status" value="1"/>
</dbReference>
<dbReference type="SUPFAM" id="SSF49303">
    <property type="entry name" value="beta-Galactosidase/glucuronidase domain"/>
    <property type="match status" value="2"/>
</dbReference>
<dbReference type="SUPFAM" id="SSF74650">
    <property type="entry name" value="Galactose mutarotase-like"/>
    <property type="match status" value="1"/>
</dbReference>
<dbReference type="SUPFAM" id="SSF49785">
    <property type="entry name" value="Galactose-binding domain-like"/>
    <property type="match status" value="1"/>
</dbReference>
<dbReference type="PROSITE" id="PS00719">
    <property type="entry name" value="GLYCOSYL_HYDROL_F2_1"/>
    <property type="match status" value="1"/>
</dbReference>
<dbReference type="PROSITE" id="PS00608">
    <property type="entry name" value="GLYCOSYL_HYDROL_F2_2"/>
    <property type="match status" value="1"/>
</dbReference>
<keyword id="KW-0326">Glycosidase</keyword>
<keyword id="KW-0378">Hydrolase</keyword>
<protein>
    <recommendedName>
        <fullName>Beta-galactosidase</fullName>
        <shortName>Beta-gal</shortName>
        <ecNumber>3.2.1.23</ecNumber>
    </recommendedName>
    <alternativeName>
        <fullName>Lactase</fullName>
    </alternativeName>
</protein>
<organism>
    <name type="scientific">Actinobacillus pleuropneumoniae</name>
    <name type="common">Haemophilus pleuropneumoniae</name>
    <dbReference type="NCBI Taxonomy" id="715"/>
    <lineage>
        <taxon>Bacteria</taxon>
        <taxon>Pseudomonadati</taxon>
        <taxon>Pseudomonadota</taxon>
        <taxon>Gammaproteobacteria</taxon>
        <taxon>Pasteurellales</taxon>
        <taxon>Pasteurellaceae</taxon>
        <taxon>Actinobacillus</taxon>
    </lineage>
</organism>
<sequence>MILPNYFQDPNTLHVNTVEHHAYFIPHQQNETALSGKREQSDYFTLLNGQWDFNYFQSYHDLPDNFLDIAFEHKIPVPANWQNHGFDHHHYTNINYPFPFEPPFVPHQNPCGVYHRTLQLTPKHKRYLLNFEGVDSCLFVYVNKQFVGYSQISHNTSEFDVSDYLQAGTNHLTVVVLKWCDGSYLEDQDKFRMSGIFRDVYLLEREQNYLQDFFIQYELDDELRHANLKVETLFSRQPQAIEYQLLNPNGFTVFNQTDTHLNIEVEDIQLWNAEKPQLYTLILHTAEEVIVQKIGFRKVEIKDGILLFNQQPIKFKGVNRHDSDPKTGYAITYAQAHKDLQLMKQHNINAIRTAHYPNAPWFSELCDQYGFYLIGESDVESHGASMLTVKMPEPSILLNHQNDLQTERIRQDMIDNYCYFARDPLFKKAILDRQQANVERDKNRTSIIIWSLGNEAGYGANFEAAAAWIKQRDKSRLVHYESSIYQHSADNNDLSNLDFYSEMYGSTEDIDRYCATAQRKPFVLCEYSHAMGNSNGDAEDYWQAFHRHPQSCGGFVWEWCDHAPYRANGQFGYGGDFGESPHDGNFCMDGLVSPDRIPHSNLLELKNVNRPARAELIDNQIVIHNYLDFTDLADYLTIDYEFVENGVVTSGGNLSVSCKPHSSVILPIELPKNNGHLWLLNLDYRLNTATELLEAEHSLGFEQLNLFSENKLVLPKFTIEKSTFEVQEDHFRINVHNGQFSYQLDKQKGIFSRIEKAGKAIIQQPLDFNIWRAPTDNDRLIREAWQNAGYDKAYTRAYEIQWQQSEQAVEFSVKSAIVSISRGRILTLDIRYRIFNDGQISVEINAIRPTELPYLPRFGLRFWLAKAENTVEYFGYGEQESYVDKHHLANLGIYHTTAKQNHTDYVKPQENGSHYGCEYLKSENLFVSASQPFSFNLSPYTQEELTEKKHYYELQESDYSVLCIDYKMSGIGSNSCGPNLKDQYRLMESEFKIRFDLIFDKTIRQ</sequence>
<reference key="1">
    <citation type="journal article" date="1997" name="FEMS Microbiol. Lett.">
        <title>Expression and phylogenetic relationships of a novel lacZ homologue from Actinobacillus pleuropneumoniae.</title>
        <authorList>
            <person name="Anderson T.J."/>
            <person name="Macinnes J.I."/>
        </authorList>
    </citation>
    <scope>NUCLEOTIDE SEQUENCE [GENOMIC DNA]</scope>
    <source>
        <strain>CM5 / Serotype 1</strain>
    </source>
</reference>
<proteinExistence type="inferred from homology"/>
<evidence type="ECO:0000250" key="1"/>
<evidence type="ECO:0000305" key="2"/>
<accession>P70753</accession>
<gene>
    <name type="primary">lacZ</name>
</gene>
<name>BGAL_ACTPL</name>